<evidence type="ECO:0000255" key="1">
    <source>
        <dbReference type="HAMAP-Rule" id="MF_00456"/>
    </source>
</evidence>
<proteinExistence type="inferred from homology"/>
<name>PROB_NEIMF</name>
<sequence>MKYKRIVFKVGTSSITHSDGSLSRGKIQTITRQLAALHHAGHELVLVSSGAVAAGFGALGFKKRPVKIADKQASAAVGQGLLMEEYTANLSSDGIVSAQILLSRADFADKRRYQNAGGALSVLLQRRAVPIINENDTVSVEELKIGDNDTLSAQVAAMIQADLLVLLTDIDGLYTGNPNSNPDAVRLDKIEHINHEIIEMAGGSGSANGTGGMLTKIKAATIAAESGVPVYICSSLKPDALAEAAEHQADGSFFVPRAKGLRTQKQWLAFYSESRGSVYVDEGAEHALSEQGKSLLMSGIAGIEGHFSRMDTVTVYSKATKQPLGKGRVLFGSAAAEDLLKSRKAKGVFIHRDDWISITPEIRLLLTEF</sequence>
<organism>
    <name type="scientific">Neisseria meningitidis serogroup C / serotype 2a (strain ATCC 700532 / DSM 15464 / FAM18)</name>
    <dbReference type="NCBI Taxonomy" id="272831"/>
    <lineage>
        <taxon>Bacteria</taxon>
        <taxon>Pseudomonadati</taxon>
        <taxon>Pseudomonadota</taxon>
        <taxon>Betaproteobacteria</taxon>
        <taxon>Neisseriales</taxon>
        <taxon>Neisseriaceae</taxon>
        <taxon>Neisseria</taxon>
    </lineage>
</organism>
<accession>A1KTV5</accession>
<dbReference type="EC" id="2.7.2.11" evidence="1"/>
<dbReference type="EMBL" id="AM421808">
    <property type="protein sequence ID" value="CAM10295.1"/>
    <property type="molecule type" value="Genomic_DNA"/>
</dbReference>
<dbReference type="RefSeq" id="WP_002221043.1">
    <property type="nucleotide sequence ID" value="NC_008767.1"/>
</dbReference>
<dbReference type="SMR" id="A1KTV5"/>
<dbReference type="KEGG" id="nmc:NMC1033"/>
<dbReference type="HOGENOM" id="CLU_025400_2_0_4"/>
<dbReference type="UniPathway" id="UPA00098">
    <property type="reaction ID" value="UER00359"/>
</dbReference>
<dbReference type="Proteomes" id="UP000002286">
    <property type="component" value="Chromosome"/>
</dbReference>
<dbReference type="GO" id="GO:0005829">
    <property type="term" value="C:cytosol"/>
    <property type="evidence" value="ECO:0007669"/>
    <property type="project" value="TreeGrafter"/>
</dbReference>
<dbReference type="GO" id="GO:0005524">
    <property type="term" value="F:ATP binding"/>
    <property type="evidence" value="ECO:0007669"/>
    <property type="project" value="UniProtKB-KW"/>
</dbReference>
<dbReference type="GO" id="GO:0004349">
    <property type="term" value="F:glutamate 5-kinase activity"/>
    <property type="evidence" value="ECO:0007669"/>
    <property type="project" value="UniProtKB-UniRule"/>
</dbReference>
<dbReference type="GO" id="GO:0003723">
    <property type="term" value="F:RNA binding"/>
    <property type="evidence" value="ECO:0007669"/>
    <property type="project" value="InterPro"/>
</dbReference>
<dbReference type="GO" id="GO:0055129">
    <property type="term" value="P:L-proline biosynthetic process"/>
    <property type="evidence" value="ECO:0007669"/>
    <property type="project" value="UniProtKB-UniRule"/>
</dbReference>
<dbReference type="CDD" id="cd04242">
    <property type="entry name" value="AAK_G5K_ProB"/>
    <property type="match status" value="1"/>
</dbReference>
<dbReference type="CDD" id="cd21157">
    <property type="entry name" value="PUA_G5K"/>
    <property type="match status" value="1"/>
</dbReference>
<dbReference type="FunFam" id="2.30.130.10:FF:000011">
    <property type="entry name" value="Glutamate 5-kinase"/>
    <property type="match status" value="1"/>
</dbReference>
<dbReference type="FunFam" id="3.40.1160.10:FF:000018">
    <property type="entry name" value="Glutamate 5-kinase"/>
    <property type="match status" value="1"/>
</dbReference>
<dbReference type="Gene3D" id="3.40.1160.10">
    <property type="entry name" value="Acetylglutamate kinase-like"/>
    <property type="match status" value="1"/>
</dbReference>
<dbReference type="Gene3D" id="2.30.130.10">
    <property type="entry name" value="PUA domain"/>
    <property type="match status" value="1"/>
</dbReference>
<dbReference type="HAMAP" id="MF_00456">
    <property type="entry name" value="ProB"/>
    <property type="match status" value="1"/>
</dbReference>
<dbReference type="InterPro" id="IPR036393">
    <property type="entry name" value="AceGlu_kinase-like_sf"/>
</dbReference>
<dbReference type="InterPro" id="IPR001048">
    <property type="entry name" value="Asp/Glu/Uridylate_kinase"/>
</dbReference>
<dbReference type="InterPro" id="IPR041739">
    <property type="entry name" value="G5K_ProB"/>
</dbReference>
<dbReference type="InterPro" id="IPR001057">
    <property type="entry name" value="Glu/AcGlu_kinase"/>
</dbReference>
<dbReference type="InterPro" id="IPR011529">
    <property type="entry name" value="Glu_5kinase"/>
</dbReference>
<dbReference type="InterPro" id="IPR005715">
    <property type="entry name" value="Glu_5kinase/COase_Synthase"/>
</dbReference>
<dbReference type="InterPro" id="IPR019797">
    <property type="entry name" value="Glutamate_5-kinase_CS"/>
</dbReference>
<dbReference type="InterPro" id="IPR002478">
    <property type="entry name" value="PUA"/>
</dbReference>
<dbReference type="InterPro" id="IPR015947">
    <property type="entry name" value="PUA-like_sf"/>
</dbReference>
<dbReference type="InterPro" id="IPR036974">
    <property type="entry name" value="PUA_sf"/>
</dbReference>
<dbReference type="NCBIfam" id="TIGR01027">
    <property type="entry name" value="proB"/>
    <property type="match status" value="1"/>
</dbReference>
<dbReference type="PANTHER" id="PTHR43654">
    <property type="entry name" value="GLUTAMATE 5-KINASE"/>
    <property type="match status" value="1"/>
</dbReference>
<dbReference type="PANTHER" id="PTHR43654:SF1">
    <property type="entry name" value="ISOPENTENYL PHOSPHATE KINASE"/>
    <property type="match status" value="1"/>
</dbReference>
<dbReference type="Pfam" id="PF00696">
    <property type="entry name" value="AA_kinase"/>
    <property type="match status" value="1"/>
</dbReference>
<dbReference type="Pfam" id="PF01472">
    <property type="entry name" value="PUA"/>
    <property type="match status" value="1"/>
</dbReference>
<dbReference type="PIRSF" id="PIRSF000729">
    <property type="entry name" value="GK"/>
    <property type="match status" value="1"/>
</dbReference>
<dbReference type="PRINTS" id="PR00474">
    <property type="entry name" value="GLU5KINASE"/>
</dbReference>
<dbReference type="SMART" id="SM00359">
    <property type="entry name" value="PUA"/>
    <property type="match status" value="1"/>
</dbReference>
<dbReference type="SUPFAM" id="SSF53633">
    <property type="entry name" value="Carbamate kinase-like"/>
    <property type="match status" value="1"/>
</dbReference>
<dbReference type="SUPFAM" id="SSF88697">
    <property type="entry name" value="PUA domain-like"/>
    <property type="match status" value="1"/>
</dbReference>
<dbReference type="PROSITE" id="PS00902">
    <property type="entry name" value="GLUTAMATE_5_KINASE"/>
    <property type="match status" value="1"/>
</dbReference>
<dbReference type="PROSITE" id="PS50890">
    <property type="entry name" value="PUA"/>
    <property type="match status" value="1"/>
</dbReference>
<comment type="function">
    <text evidence="1">Catalyzes the transfer of a phosphate group to glutamate to form L-glutamate 5-phosphate.</text>
</comment>
<comment type="catalytic activity">
    <reaction evidence="1">
        <text>L-glutamate + ATP = L-glutamyl 5-phosphate + ADP</text>
        <dbReference type="Rhea" id="RHEA:14877"/>
        <dbReference type="ChEBI" id="CHEBI:29985"/>
        <dbReference type="ChEBI" id="CHEBI:30616"/>
        <dbReference type="ChEBI" id="CHEBI:58274"/>
        <dbReference type="ChEBI" id="CHEBI:456216"/>
        <dbReference type="EC" id="2.7.2.11"/>
    </reaction>
</comment>
<comment type="pathway">
    <text evidence="1">Amino-acid biosynthesis; L-proline biosynthesis; L-glutamate 5-semialdehyde from L-glutamate: step 1/2.</text>
</comment>
<comment type="subcellular location">
    <subcellularLocation>
        <location evidence="1">Cytoplasm</location>
    </subcellularLocation>
</comment>
<comment type="similarity">
    <text evidence="1">Belongs to the glutamate 5-kinase family.</text>
</comment>
<reference key="1">
    <citation type="journal article" date="2007" name="PLoS Genet.">
        <title>Meningococcal genetic variation mechanisms viewed through comparative analysis of serogroup C strain FAM18.</title>
        <authorList>
            <person name="Bentley S.D."/>
            <person name="Vernikos G.S."/>
            <person name="Snyder L.A.S."/>
            <person name="Churcher C."/>
            <person name="Arrowsmith C."/>
            <person name="Chillingworth T."/>
            <person name="Cronin A."/>
            <person name="Davis P.H."/>
            <person name="Holroyd N.E."/>
            <person name="Jagels K."/>
            <person name="Maddison M."/>
            <person name="Moule S."/>
            <person name="Rabbinowitsch E."/>
            <person name="Sharp S."/>
            <person name="Unwin L."/>
            <person name="Whitehead S."/>
            <person name="Quail M.A."/>
            <person name="Achtman M."/>
            <person name="Barrell B.G."/>
            <person name="Saunders N.J."/>
            <person name="Parkhill J."/>
        </authorList>
    </citation>
    <scope>NUCLEOTIDE SEQUENCE [LARGE SCALE GENOMIC DNA]</scope>
    <source>
        <strain>ATCC 700532 / DSM 15464 / FAM18</strain>
    </source>
</reference>
<feature type="chain" id="PRO_1000081080" description="Glutamate 5-kinase">
    <location>
        <begin position="1"/>
        <end position="369"/>
    </location>
</feature>
<feature type="domain" description="PUA" evidence="1">
    <location>
        <begin position="275"/>
        <end position="355"/>
    </location>
</feature>
<feature type="binding site" evidence="1">
    <location>
        <position position="9"/>
    </location>
    <ligand>
        <name>ATP</name>
        <dbReference type="ChEBI" id="CHEBI:30616"/>
    </ligand>
</feature>
<feature type="binding site" evidence="1">
    <location>
        <position position="49"/>
    </location>
    <ligand>
        <name>substrate</name>
    </ligand>
</feature>
<feature type="binding site" evidence="1">
    <location>
        <position position="136"/>
    </location>
    <ligand>
        <name>substrate</name>
    </ligand>
</feature>
<feature type="binding site" evidence="1">
    <location>
        <position position="148"/>
    </location>
    <ligand>
        <name>substrate</name>
    </ligand>
</feature>
<feature type="binding site" evidence="1">
    <location>
        <begin position="168"/>
        <end position="169"/>
    </location>
    <ligand>
        <name>ATP</name>
        <dbReference type="ChEBI" id="CHEBI:30616"/>
    </ligand>
</feature>
<feature type="binding site" evidence="1">
    <location>
        <begin position="210"/>
        <end position="216"/>
    </location>
    <ligand>
        <name>ATP</name>
        <dbReference type="ChEBI" id="CHEBI:30616"/>
    </ligand>
</feature>
<gene>
    <name evidence="1" type="primary">proB</name>
    <name type="ordered locus">NMC1033</name>
</gene>
<protein>
    <recommendedName>
        <fullName evidence="1">Glutamate 5-kinase</fullName>
        <ecNumber evidence="1">2.7.2.11</ecNumber>
    </recommendedName>
    <alternativeName>
        <fullName evidence="1">Gamma-glutamyl kinase</fullName>
        <shortName evidence="1">GK</shortName>
    </alternativeName>
</protein>
<keyword id="KW-0028">Amino-acid biosynthesis</keyword>
<keyword id="KW-0067">ATP-binding</keyword>
<keyword id="KW-0963">Cytoplasm</keyword>
<keyword id="KW-0418">Kinase</keyword>
<keyword id="KW-0547">Nucleotide-binding</keyword>
<keyword id="KW-0641">Proline biosynthesis</keyword>
<keyword id="KW-0808">Transferase</keyword>